<organism>
    <name type="scientific">Actinobacillus pleuropneumoniae serotype 7 (strain AP76)</name>
    <dbReference type="NCBI Taxonomy" id="537457"/>
    <lineage>
        <taxon>Bacteria</taxon>
        <taxon>Pseudomonadati</taxon>
        <taxon>Pseudomonadota</taxon>
        <taxon>Gammaproteobacteria</taxon>
        <taxon>Pasteurellales</taxon>
        <taxon>Pasteurellaceae</taxon>
        <taxon>Actinobacillus</taxon>
    </lineage>
</organism>
<accession>B3GXE6</accession>
<evidence type="ECO:0000255" key="1">
    <source>
        <dbReference type="HAMAP-Rule" id="MF_00440"/>
    </source>
</evidence>
<keyword id="KW-0067">ATP-binding</keyword>
<keyword id="KW-0238">DNA-binding</keyword>
<keyword id="KW-0479">Metal-binding</keyword>
<keyword id="KW-0547">Nucleotide-binding</keyword>
<keyword id="KW-0678">Repressor</keyword>
<keyword id="KW-0804">Transcription</keyword>
<keyword id="KW-0805">Transcription regulation</keyword>
<keyword id="KW-0862">Zinc</keyword>
<keyword id="KW-0863">Zinc-finger</keyword>
<dbReference type="EMBL" id="CP001091">
    <property type="protein sequence ID" value="ACE61405.1"/>
    <property type="molecule type" value="Genomic_DNA"/>
</dbReference>
<dbReference type="RefSeq" id="WP_005597079.1">
    <property type="nucleotide sequence ID" value="NC_010939.1"/>
</dbReference>
<dbReference type="SMR" id="B3GXE6"/>
<dbReference type="GeneID" id="48598892"/>
<dbReference type="KEGG" id="apa:APP7_0753"/>
<dbReference type="HOGENOM" id="CLU_108412_0_0_6"/>
<dbReference type="Proteomes" id="UP000001226">
    <property type="component" value="Chromosome"/>
</dbReference>
<dbReference type="GO" id="GO:0005524">
    <property type="term" value="F:ATP binding"/>
    <property type="evidence" value="ECO:0007669"/>
    <property type="project" value="UniProtKB-KW"/>
</dbReference>
<dbReference type="GO" id="GO:0003677">
    <property type="term" value="F:DNA binding"/>
    <property type="evidence" value="ECO:0007669"/>
    <property type="project" value="UniProtKB-KW"/>
</dbReference>
<dbReference type="GO" id="GO:0008270">
    <property type="term" value="F:zinc ion binding"/>
    <property type="evidence" value="ECO:0007669"/>
    <property type="project" value="UniProtKB-UniRule"/>
</dbReference>
<dbReference type="GO" id="GO:0045892">
    <property type="term" value="P:negative regulation of DNA-templated transcription"/>
    <property type="evidence" value="ECO:0007669"/>
    <property type="project" value="UniProtKB-UniRule"/>
</dbReference>
<dbReference type="HAMAP" id="MF_00440">
    <property type="entry name" value="NrdR"/>
    <property type="match status" value="1"/>
</dbReference>
<dbReference type="InterPro" id="IPR005144">
    <property type="entry name" value="ATP-cone_dom"/>
</dbReference>
<dbReference type="InterPro" id="IPR055173">
    <property type="entry name" value="NrdR-like_N"/>
</dbReference>
<dbReference type="InterPro" id="IPR003796">
    <property type="entry name" value="RNR_NrdR-like"/>
</dbReference>
<dbReference type="NCBIfam" id="TIGR00244">
    <property type="entry name" value="transcriptional regulator NrdR"/>
    <property type="match status" value="1"/>
</dbReference>
<dbReference type="PANTHER" id="PTHR30455">
    <property type="entry name" value="TRANSCRIPTIONAL REPRESSOR NRDR"/>
    <property type="match status" value="1"/>
</dbReference>
<dbReference type="PANTHER" id="PTHR30455:SF2">
    <property type="entry name" value="TRANSCRIPTIONAL REPRESSOR NRDR"/>
    <property type="match status" value="1"/>
</dbReference>
<dbReference type="Pfam" id="PF03477">
    <property type="entry name" value="ATP-cone"/>
    <property type="match status" value="1"/>
</dbReference>
<dbReference type="Pfam" id="PF22811">
    <property type="entry name" value="Zn_ribbon_NrdR"/>
    <property type="match status" value="1"/>
</dbReference>
<dbReference type="PROSITE" id="PS51161">
    <property type="entry name" value="ATP_CONE"/>
    <property type="match status" value="1"/>
</dbReference>
<feature type="chain" id="PRO_1000124459" description="Transcriptional repressor NrdR">
    <location>
        <begin position="1"/>
        <end position="149"/>
    </location>
</feature>
<feature type="domain" description="ATP-cone" evidence="1">
    <location>
        <begin position="49"/>
        <end position="139"/>
    </location>
</feature>
<feature type="zinc finger region" evidence="1">
    <location>
        <begin position="3"/>
        <end position="34"/>
    </location>
</feature>
<proteinExistence type="inferred from homology"/>
<protein>
    <recommendedName>
        <fullName evidence="1">Transcriptional repressor NrdR</fullName>
    </recommendedName>
</protein>
<reference key="1">
    <citation type="submission" date="2008-06" db="EMBL/GenBank/DDBJ databases">
        <title>Genome and proteome analysis of A. pleuropneumoniae serotype 7.</title>
        <authorList>
            <person name="Linke B."/>
            <person name="Buettner F."/>
            <person name="Martinez-Arias R."/>
            <person name="Goesmann A."/>
            <person name="Baltes N."/>
            <person name="Tegetmeyer H."/>
            <person name="Singh M."/>
            <person name="Gerlach G.F."/>
        </authorList>
    </citation>
    <scope>NUCLEOTIDE SEQUENCE [LARGE SCALE GENOMIC DNA]</scope>
    <source>
        <strain>AP76</strain>
    </source>
</reference>
<sequence length="149" mass="17011">MRCPFCAAEETKVVDSRLAADGYQIRRRRECTSCKERFTTFESAELVVPYVIKNNGNRVPFDANKLRVSLSRALEKRPVSADDLEKAISKIIIQLQSTGEREVPSKLVGSLAMDALKQLDKVAYIRFASVYLSFDDIEEFTKEIEKLRE</sequence>
<gene>
    <name evidence="1" type="primary">nrdR</name>
    <name type="ordered locus">APP7_0753</name>
</gene>
<comment type="function">
    <text evidence="1">Negatively regulates transcription of bacterial ribonucleotide reductase nrd genes and operons by binding to NrdR-boxes.</text>
</comment>
<comment type="cofactor">
    <cofactor evidence="1">
        <name>Zn(2+)</name>
        <dbReference type="ChEBI" id="CHEBI:29105"/>
    </cofactor>
    <text evidence="1">Binds 1 zinc ion.</text>
</comment>
<comment type="similarity">
    <text evidence="1">Belongs to the NrdR family.</text>
</comment>
<name>NRDR_ACTP7</name>